<proteinExistence type="evidence at transcript level"/>
<evidence type="ECO:0000250" key="1">
    <source>
        <dbReference type="UniProtKB" id="P51170"/>
    </source>
</evidence>
<evidence type="ECO:0000255" key="2"/>
<evidence type="ECO:0000256" key="3">
    <source>
        <dbReference type="SAM" id="MobiDB-lite"/>
    </source>
</evidence>
<evidence type="ECO:0000269" key="4">
    <source>
    </source>
</evidence>
<evidence type="ECO:0000305" key="5"/>
<evidence type="ECO:0000305" key="6">
    <source>
    </source>
</evidence>
<evidence type="ECO:0000312" key="7">
    <source>
        <dbReference type="EMBL" id="BAL46408.1"/>
    </source>
</evidence>
<sequence length="653" mass="74712">MGHGRRISESIKKQLPVTGPEAPTVKNLMDWYLNNTNTHGCRRIAVSRGYLRRWIWICFTVSSVGMIFWQWTLLLMSYYTVSVSVTVQFQTLPFPAVTICNINPYRKNATSALLEELDKQTKLILKELYTSCTGCSNRKLRSVLLNEAPEEDSGVAKLLQDMPLMKFEVIKEDHVIVSELSSNRQYRINNTFITRMYNNMDLATVGEQVGFKICDANKSNCIIYTFNSGVTAILEWYRLNYLNIMAQIPNEKKLEMGYSADDLIVTCMYDGQSCDSRNFTLFQHPLHGNCYTFNSGDDGNILQTLTGGSEYGLKLTLYLENDDYNPYLFTSMGAKIIVHDQTEYPLVDDVGLEIQTATETLIGLQVTTSAKLSKPYSDCTMDGSDVLEQNLYNTSYSLQICLHSCFQTEMISNCGCAYYEQPLPSGAEYCYYEKYPGWIYCYYQLQDKFVNERLACQDICKETCNSKDWDLTKSLARWPSVASKDWVLNLLNWERGLNNTLNKNDLASIAIFYQDLNLRSLSESPANSIATLLSNMGGQLGLWMSCSIVCFLEMWEVFLVDILTIIARYWLHRGRQWWRKRKERQMQQPSPPDHDTGHHNPVCIDDEDPPTFHTAMQLPCVQTGPVPSTPPPQYNALRIQSVFDEQVSDTEVN</sequence>
<dbReference type="EMBL" id="AB675924">
    <property type="protein sequence ID" value="BAL46408.1"/>
    <property type="molecule type" value="mRNA"/>
</dbReference>
<dbReference type="SMR" id="H1AFJ7"/>
<dbReference type="GO" id="GO:0016324">
    <property type="term" value="C:apical plasma membrane"/>
    <property type="evidence" value="ECO:0000250"/>
    <property type="project" value="UniProtKB"/>
</dbReference>
<dbReference type="GO" id="GO:0034706">
    <property type="term" value="C:sodium channel complex"/>
    <property type="evidence" value="ECO:0000305"/>
    <property type="project" value="UniProtKB"/>
</dbReference>
<dbReference type="GO" id="GO:0015280">
    <property type="term" value="F:ligand-gated sodium channel activity"/>
    <property type="evidence" value="ECO:0007669"/>
    <property type="project" value="InterPro"/>
</dbReference>
<dbReference type="GO" id="GO:0035725">
    <property type="term" value="P:sodium ion transmembrane transport"/>
    <property type="evidence" value="ECO:0000314"/>
    <property type="project" value="UniProtKB"/>
</dbReference>
<dbReference type="FunFam" id="1.10.287.770:FF:000005">
    <property type="entry name" value="Amiloride-sensitive sodium channel subunit gamma"/>
    <property type="match status" value="1"/>
</dbReference>
<dbReference type="FunFam" id="2.60.470.10:FF:000005">
    <property type="entry name" value="Amiloride-sensitive sodium channel subunit gamma"/>
    <property type="match status" value="1"/>
</dbReference>
<dbReference type="Gene3D" id="2.60.470.10">
    <property type="entry name" value="Acid-sensing ion channels like domains"/>
    <property type="match status" value="1"/>
</dbReference>
<dbReference type="Gene3D" id="1.10.287.770">
    <property type="entry name" value="YojJ-like"/>
    <property type="match status" value="1"/>
</dbReference>
<dbReference type="InterPro" id="IPR001873">
    <property type="entry name" value="ENaC"/>
</dbReference>
<dbReference type="InterPro" id="IPR004724">
    <property type="entry name" value="ENaC_chordates"/>
</dbReference>
<dbReference type="InterPro" id="IPR020903">
    <property type="entry name" value="ENaC_CS"/>
</dbReference>
<dbReference type="NCBIfam" id="TIGR00859">
    <property type="entry name" value="ENaC"/>
    <property type="match status" value="1"/>
</dbReference>
<dbReference type="PANTHER" id="PTHR11690:SF19">
    <property type="entry name" value="AMILORIDE-SENSITIVE SODIUM CHANNEL SUBUNIT GAMMA"/>
    <property type="match status" value="1"/>
</dbReference>
<dbReference type="PANTHER" id="PTHR11690">
    <property type="entry name" value="AMILORIDE-SENSITIVE SODIUM CHANNEL-RELATED"/>
    <property type="match status" value="1"/>
</dbReference>
<dbReference type="Pfam" id="PF00858">
    <property type="entry name" value="ASC"/>
    <property type="match status" value="1"/>
</dbReference>
<dbReference type="PRINTS" id="PR01078">
    <property type="entry name" value="AMINACHANNEL"/>
</dbReference>
<dbReference type="PROSITE" id="PS01206">
    <property type="entry name" value="ASC"/>
    <property type="match status" value="1"/>
</dbReference>
<accession>H1AFJ7</accession>
<organism>
    <name type="scientific">Neoceratodus forsteri</name>
    <name type="common">Australian lungfish</name>
    <name type="synonym">Ceratodus forsteri</name>
    <dbReference type="NCBI Taxonomy" id="7892"/>
    <lineage>
        <taxon>Eukaryota</taxon>
        <taxon>Metazoa</taxon>
        <taxon>Chordata</taxon>
        <taxon>Craniata</taxon>
        <taxon>Vertebrata</taxon>
        <taxon>Euteleostomi</taxon>
        <taxon>Dipnomorpha</taxon>
        <taxon>Ceratodontiformes</taxon>
        <taxon>Ceratodontoidei</taxon>
        <taxon>Ceratodontidae</taxon>
        <taxon>Neoceratodus</taxon>
    </lineage>
</organism>
<protein>
    <recommendedName>
        <fullName evidence="6">Epithelial sodium channel subunit gamma</fullName>
    </recommendedName>
    <alternativeName>
        <fullName evidence="1">Amiloride-sensitive sodium channel subunit gamma</fullName>
    </alternativeName>
</protein>
<feature type="chain" id="PRO_0000433088" description="Epithelial sodium channel subunit gamma">
    <location>
        <begin position="1"/>
        <end position="653"/>
    </location>
</feature>
<feature type="topological domain" description="Cytoplasmic" evidence="1">
    <location>
        <begin position="1"/>
        <end position="54"/>
    </location>
</feature>
<feature type="transmembrane region" description="Helical; Name=1" evidence="2">
    <location>
        <begin position="55"/>
        <end position="75"/>
    </location>
</feature>
<feature type="topological domain" description="Extracellular" evidence="1">
    <location>
        <begin position="76"/>
        <end position="546"/>
    </location>
</feature>
<feature type="transmembrane region" description="Helical; Name=2" evidence="2">
    <location>
        <begin position="547"/>
        <end position="567"/>
    </location>
</feature>
<feature type="topological domain" description="Cytoplasmic" evidence="1">
    <location>
        <begin position="568"/>
        <end position="653"/>
    </location>
</feature>
<feature type="region of interest" description="Disordered" evidence="3">
    <location>
        <begin position="582"/>
        <end position="608"/>
    </location>
</feature>
<feature type="disulfide bond" evidence="1">
    <location>
        <begin position="100"/>
        <end position="290"/>
    </location>
</feature>
<feature type="disulfide bond" evidence="1">
    <location>
        <begin position="214"/>
        <end position="221"/>
    </location>
</feature>
<feature type="disulfide bond" evidence="1">
    <location>
        <begin position="267"/>
        <end position="274"/>
    </location>
</feature>
<feature type="disulfide bond" evidence="1">
    <location>
        <begin position="379"/>
        <end position="464"/>
    </location>
</feature>
<feature type="disulfide bond" evidence="1">
    <location>
        <begin position="401"/>
        <end position="460"/>
    </location>
</feature>
<feature type="disulfide bond" evidence="1">
    <location>
        <begin position="405"/>
        <end position="456"/>
    </location>
</feature>
<feature type="disulfide bond" evidence="1">
    <location>
        <begin position="414"/>
        <end position="441"/>
    </location>
</feature>
<feature type="disulfide bond" evidence="1">
    <location>
        <begin position="416"/>
        <end position="430"/>
    </location>
</feature>
<comment type="function">
    <text evidence="4">This is one of the three pore-forming subunits of the heterotrimeric epithelial sodium channel (ENaC), a critical regulator of sodium balance and fluid homeostasis. ENaC operates in epithelial tissues, where it mediates the electrodiffusion of sodium ions from extracellular fluid through the apical membrane of cells, with water following osmotically.</text>
</comment>
<comment type="catalytic activity">
    <reaction evidence="1">
        <text>Na(+)(in) = Na(+)(out)</text>
        <dbReference type="Rhea" id="RHEA:34963"/>
        <dbReference type="ChEBI" id="CHEBI:29101"/>
    </reaction>
</comment>
<comment type="activity regulation">
    <text evidence="1">Originally identified and characterized by its inhibition by the diuretic drug amiloride.</text>
</comment>
<comment type="subunit">
    <text evidence="1">Component of the heterotrimeric epithelial sodium channel (ENaC) composed of an alpha/SCNN1A, a beta/SCNN1B and a gamma/SCNN1G subunit.</text>
</comment>
<comment type="subcellular location">
    <subcellularLocation>
        <location evidence="1">Apical cell membrane</location>
        <topology evidence="1">Multi-pass membrane protein</topology>
    </subcellularLocation>
</comment>
<comment type="tissue specificity">
    <text evidence="4">Strongly expressed in gill, liver, kidney and rectum and more weakly in heart, muscle and intestine.</text>
</comment>
<comment type="similarity">
    <text evidence="5">Belongs to the amiloride-sensitive sodium channel (TC 1.A.6) family. SCNN1G subfamily.</text>
</comment>
<name>SCNNG_NEOFS</name>
<keyword id="KW-1003">Cell membrane</keyword>
<keyword id="KW-1015">Disulfide bond</keyword>
<keyword id="KW-0407">Ion channel</keyword>
<keyword id="KW-0406">Ion transport</keyword>
<keyword id="KW-0472">Membrane</keyword>
<keyword id="KW-0915">Sodium</keyword>
<keyword id="KW-0894">Sodium channel</keyword>
<keyword id="KW-0739">Sodium transport</keyword>
<keyword id="KW-0812">Transmembrane</keyword>
<keyword id="KW-1133">Transmembrane helix</keyword>
<keyword id="KW-0813">Transport</keyword>
<reference key="1">
    <citation type="journal article" date="2012" name="Proc. R. Soc. B">
        <title>The epithelial sodium channel in the Australian lungfish, Neoceratodus forsteri (Osteichthyes: Dipnoi).</title>
        <authorList>
            <person name="Uchiyama M."/>
            <person name="Maejima S."/>
            <person name="Yoshie S."/>
            <person name="Kubo Y."/>
            <person name="Konno N."/>
            <person name="Joss J.M.P."/>
        </authorList>
    </citation>
    <scope>NUCLEOTIDE SEQUENCE [MRNA]</scope>
    <scope>FUNCTION</scope>
    <scope>TRANSPORTER ACTIVITY</scope>
    <scope>ACTIVITY REGULATION</scope>
    <scope>SUBCELLULAR LOCATION</scope>
    <scope>TISSUE SPECIFICITY</scope>
    <source>
        <tissue>Gill</tissue>
    </source>
</reference>
<gene>
    <name evidence="1" type="primary">scnn1g</name>
    <name evidence="7" type="synonym">enacgamma</name>
</gene>